<feature type="chain" id="PRO_0000129654" description="Large ribosomal subunit protein uL2">
    <location>
        <begin position="1"/>
        <end position="275"/>
    </location>
</feature>
<feature type="region of interest" description="Disordered" evidence="2">
    <location>
        <begin position="223"/>
        <end position="275"/>
    </location>
</feature>
<reference key="1">
    <citation type="journal article" date="2002" name="Nature">
        <title>Comparison of the genomes of two Xanthomonas pathogens with differing host specificities.</title>
        <authorList>
            <person name="da Silva A.C.R."/>
            <person name="Ferro J.A."/>
            <person name="Reinach F.C."/>
            <person name="Farah C.S."/>
            <person name="Furlan L.R."/>
            <person name="Quaggio R.B."/>
            <person name="Monteiro-Vitorello C.B."/>
            <person name="Van Sluys M.A."/>
            <person name="Almeida N.F. Jr."/>
            <person name="Alves L.M.C."/>
            <person name="do Amaral A.M."/>
            <person name="Bertolini M.C."/>
            <person name="Camargo L.E.A."/>
            <person name="Camarotte G."/>
            <person name="Cannavan F."/>
            <person name="Cardozo J."/>
            <person name="Chambergo F."/>
            <person name="Ciapina L.P."/>
            <person name="Cicarelli R.M.B."/>
            <person name="Coutinho L.L."/>
            <person name="Cursino-Santos J.R."/>
            <person name="El-Dorry H."/>
            <person name="Faria J.B."/>
            <person name="Ferreira A.J.S."/>
            <person name="Ferreira R.C.C."/>
            <person name="Ferro M.I.T."/>
            <person name="Formighieri E.F."/>
            <person name="Franco M.C."/>
            <person name="Greggio C.C."/>
            <person name="Gruber A."/>
            <person name="Katsuyama A.M."/>
            <person name="Kishi L.T."/>
            <person name="Leite R.P."/>
            <person name="Lemos E.G.M."/>
            <person name="Lemos M.V.F."/>
            <person name="Locali E.C."/>
            <person name="Machado M.A."/>
            <person name="Madeira A.M.B.N."/>
            <person name="Martinez-Rossi N.M."/>
            <person name="Martins E.C."/>
            <person name="Meidanis J."/>
            <person name="Menck C.F.M."/>
            <person name="Miyaki C.Y."/>
            <person name="Moon D.H."/>
            <person name="Moreira L.M."/>
            <person name="Novo M.T.M."/>
            <person name="Okura V.K."/>
            <person name="Oliveira M.C."/>
            <person name="Oliveira V.R."/>
            <person name="Pereira H.A."/>
            <person name="Rossi A."/>
            <person name="Sena J.A.D."/>
            <person name="Silva C."/>
            <person name="de Souza R.F."/>
            <person name="Spinola L.A.F."/>
            <person name="Takita M.A."/>
            <person name="Tamura R.E."/>
            <person name="Teixeira E.C."/>
            <person name="Tezza R.I.D."/>
            <person name="Trindade dos Santos M."/>
            <person name="Truffi D."/>
            <person name="Tsai S.M."/>
            <person name="White F.F."/>
            <person name="Setubal J.C."/>
            <person name="Kitajima J.P."/>
        </authorList>
    </citation>
    <scope>NUCLEOTIDE SEQUENCE [LARGE SCALE GENOMIC DNA]</scope>
    <source>
        <strain>ATCC 33913 / DSM 3586 / NCPPB 528 / LMG 568 / P 25</strain>
    </source>
</reference>
<dbReference type="EMBL" id="AE008922">
    <property type="protein sequence ID" value="AAM40208.1"/>
    <property type="molecule type" value="Genomic_DNA"/>
</dbReference>
<dbReference type="RefSeq" id="NP_636284.1">
    <property type="nucleotide sequence ID" value="NC_003902.1"/>
</dbReference>
<dbReference type="RefSeq" id="WP_011036125.1">
    <property type="nucleotide sequence ID" value="NC_003902.1"/>
</dbReference>
<dbReference type="SMR" id="Q8PC46"/>
<dbReference type="STRING" id="190485.XCC0898"/>
<dbReference type="EnsemblBacteria" id="AAM40208">
    <property type="protein sequence ID" value="AAM40208"/>
    <property type="gene ID" value="XCC0898"/>
</dbReference>
<dbReference type="KEGG" id="xcc:XCC0898"/>
<dbReference type="PATRIC" id="fig|190485.4.peg.970"/>
<dbReference type="eggNOG" id="COG0090">
    <property type="taxonomic scope" value="Bacteria"/>
</dbReference>
<dbReference type="HOGENOM" id="CLU_036235_2_1_6"/>
<dbReference type="OrthoDB" id="9778722at2"/>
<dbReference type="Proteomes" id="UP000001010">
    <property type="component" value="Chromosome"/>
</dbReference>
<dbReference type="GO" id="GO:0022625">
    <property type="term" value="C:cytosolic large ribosomal subunit"/>
    <property type="evidence" value="ECO:0000318"/>
    <property type="project" value="GO_Central"/>
</dbReference>
<dbReference type="GO" id="GO:0003723">
    <property type="term" value="F:RNA binding"/>
    <property type="evidence" value="ECO:0000318"/>
    <property type="project" value="GO_Central"/>
</dbReference>
<dbReference type="GO" id="GO:0019843">
    <property type="term" value="F:rRNA binding"/>
    <property type="evidence" value="ECO:0007669"/>
    <property type="project" value="UniProtKB-UniRule"/>
</dbReference>
<dbReference type="GO" id="GO:0003735">
    <property type="term" value="F:structural constituent of ribosome"/>
    <property type="evidence" value="ECO:0000318"/>
    <property type="project" value="GO_Central"/>
</dbReference>
<dbReference type="GO" id="GO:0016740">
    <property type="term" value="F:transferase activity"/>
    <property type="evidence" value="ECO:0007669"/>
    <property type="project" value="InterPro"/>
</dbReference>
<dbReference type="GO" id="GO:0002181">
    <property type="term" value="P:cytoplasmic translation"/>
    <property type="evidence" value="ECO:0000318"/>
    <property type="project" value="GO_Central"/>
</dbReference>
<dbReference type="FunFam" id="2.30.30.30:FF:000001">
    <property type="entry name" value="50S ribosomal protein L2"/>
    <property type="match status" value="1"/>
</dbReference>
<dbReference type="FunFam" id="2.40.50.140:FF:000003">
    <property type="entry name" value="50S ribosomal protein L2"/>
    <property type="match status" value="1"/>
</dbReference>
<dbReference type="FunFam" id="4.10.950.10:FF:000001">
    <property type="entry name" value="50S ribosomal protein L2"/>
    <property type="match status" value="1"/>
</dbReference>
<dbReference type="Gene3D" id="2.30.30.30">
    <property type="match status" value="1"/>
</dbReference>
<dbReference type="Gene3D" id="2.40.50.140">
    <property type="entry name" value="Nucleic acid-binding proteins"/>
    <property type="match status" value="1"/>
</dbReference>
<dbReference type="Gene3D" id="4.10.950.10">
    <property type="entry name" value="Ribosomal protein L2, domain 3"/>
    <property type="match status" value="1"/>
</dbReference>
<dbReference type="HAMAP" id="MF_01320_B">
    <property type="entry name" value="Ribosomal_uL2_B"/>
    <property type="match status" value="1"/>
</dbReference>
<dbReference type="InterPro" id="IPR012340">
    <property type="entry name" value="NA-bd_OB-fold"/>
</dbReference>
<dbReference type="InterPro" id="IPR014722">
    <property type="entry name" value="Rib_uL2_dom2"/>
</dbReference>
<dbReference type="InterPro" id="IPR002171">
    <property type="entry name" value="Ribosomal_uL2"/>
</dbReference>
<dbReference type="InterPro" id="IPR005880">
    <property type="entry name" value="Ribosomal_uL2_bac/org-type"/>
</dbReference>
<dbReference type="InterPro" id="IPR022669">
    <property type="entry name" value="Ribosomal_uL2_C"/>
</dbReference>
<dbReference type="InterPro" id="IPR022671">
    <property type="entry name" value="Ribosomal_uL2_CS"/>
</dbReference>
<dbReference type="InterPro" id="IPR014726">
    <property type="entry name" value="Ribosomal_uL2_dom3"/>
</dbReference>
<dbReference type="InterPro" id="IPR022666">
    <property type="entry name" value="Ribosomal_uL2_RNA-bd_dom"/>
</dbReference>
<dbReference type="InterPro" id="IPR008991">
    <property type="entry name" value="Translation_prot_SH3-like_sf"/>
</dbReference>
<dbReference type="NCBIfam" id="TIGR01171">
    <property type="entry name" value="rplB_bact"/>
    <property type="match status" value="1"/>
</dbReference>
<dbReference type="PANTHER" id="PTHR13691:SF5">
    <property type="entry name" value="LARGE RIBOSOMAL SUBUNIT PROTEIN UL2M"/>
    <property type="match status" value="1"/>
</dbReference>
<dbReference type="PANTHER" id="PTHR13691">
    <property type="entry name" value="RIBOSOMAL PROTEIN L2"/>
    <property type="match status" value="1"/>
</dbReference>
<dbReference type="Pfam" id="PF00181">
    <property type="entry name" value="Ribosomal_L2"/>
    <property type="match status" value="1"/>
</dbReference>
<dbReference type="Pfam" id="PF03947">
    <property type="entry name" value="Ribosomal_L2_C"/>
    <property type="match status" value="1"/>
</dbReference>
<dbReference type="PIRSF" id="PIRSF002158">
    <property type="entry name" value="Ribosomal_L2"/>
    <property type="match status" value="1"/>
</dbReference>
<dbReference type="SMART" id="SM01383">
    <property type="entry name" value="Ribosomal_L2"/>
    <property type="match status" value="1"/>
</dbReference>
<dbReference type="SMART" id="SM01382">
    <property type="entry name" value="Ribosomal_L2_C"/>
    <property type="match status" value="1"/>
</dbReference>
<dbReference type="SUPFAM" id="SSF50249">
    <property type="entry name" value="Nucleic acid-binding proteins"/>
    <property type="match status" value="1"/>
</dbReference>
<dbReference type="SUPFAM" id="SSF50104">
    <property type="entry name" value="Translation proteins SH3-like domain"/>
    <property type="match status" value="1"/>
</dbReference>
<dbReference type="PROSITE" id="PS00467">
    <property type="entry name" value="RIBOSOMAL_L2"/>
    <property type="match status" value="1"/>
</dbReference>
<sequence>MPLMKFKPTSPGRRSAVRVVTPDLHKGAPHAALLDSQSKSGGRNHHGRITVRHVGGGHKQHYRIIDFKRNKEGIPARVERIEYDPNRTAHIALLCYVDGERRYIIAPKGLKAGDQVIAGANAPIKTGNALPLRNIPVGTTVHGIELKPGKGAQIARAAGAAVQLVAREGIYATLRLRSGEMRKVPVECRATIGEVGNDEHNLEKLGKAGAKRRRGVRPTVRGAAMNANDHPHGGGEAKAGQGNPHPVTPWGVPTKGYKTRKNKRTQQFIVRDRRG</sequence>
<organism>
    <name type="scientific">Xanthomonas campestris pv. campestris (strain ATCC 33913 / DSM 3586 / NCPPB 528 / LMG 568 / P 25)</name>
    <dbReference type="NCBI Taxonomy" id="190485"/>
    <lineage>
        <taxon>Bacteria</taxon>
        <taxon>Pseudomonadati</taxon>
        <taxon>Pseudomonadota</taxon>
        <taxon>Gammaproteobacteria</taxon>
        <taxon>Lysobacterales</taxon>
        <taxon>Lysobacteraceae</taxon>
        <taxon>Xanthomonas</taxon>
    </lineage>
</organism>
<gene>
    <name evidence="1" type="primary">rplB</name>
    <name type="ordered locus">XCC0898</name>
</gene>
<protein>
    <recommendedName>
        <fullName evidence="1">Large ribosomal subunit protein uL2</fullName>
    </recommendedName>
    <alternativeName>
        <fullName evidence="3">50S ribosomal protein L2</fullName>
    </alternativeName>
</protein>
<evidence type="ECO:0000255" key="1">
    <source>
        <dbReference type="HAMAP-Rule" id="MF_01320"/>
    </source>
</evidence>
<evidence type="ECO:0000256" key="2">
    <source>
        <dbReference type="SAM" id="MobiDB-lite"/>
    </source>
</evidence>
<evidence type="ECO:0000305" key="3"/>
<proteinExistence type="inferred from homology"/>
<name>RL2_XANCP</name>
<keyword id="KW-1185">Reference proteome</keyword>
<keyword id="KW-0687">Ribonucleoprotein</keyword>
<keyword id="KW-0689">Ribosomal protein</keyword>
<keyword id="KW-0694">RNA-binding</keyword>
<keyword id="KW-0699">rRNA-binding</keyword>
<comment type="function">
    <text evidence="1">One of the primary rRNA binding proteins. Required for association of the 30S and 50S subunits to form the 70S ribosome, for tRNA binding and peptide bond formation. It has been suggested to have peptidyltransferase activity; this is somewhat controversial. Makes several contacts with the 16S rRNA in the 70S ribosome.</text>
</comment>
<comment type="subunit">
    <text evidence="1">Part of the 50S ribosomal subunit. Forms a bridge to the 30S subunit in the 70S ribosome.</text>
</comment>
<comment type="similarity">
    <text evidence="1">Belongs to the universal ribosomal protein uL2 family.</text>
</comment>
<accession>Q8PC46</accession>